<protein>
    <recommendedName>
        <fullName evidence="6">Phenazine 1,6-dicarboxylic acid hydroxylase PhzS</fullName>
        <ecNumber evidence="2 3">1.14.13.-</ecNumber>
    </recommendedName>
    <alternativeName>
        <fullName evidence="7">Flavin-containing monooxygenase</fullName>
    </alternativeName>
    <alternativeName>
        <fullName evidence="6">Phenazine 1-carboxylic acid hydroxylase</fullName>
        <ecNumber evidence="3">1.14.13.218</ecNumber>
    </alternativeName>
</protein>
<gene>
    <name evidence="4 5 7" type="primary">phzS</name>
</gene>
<feature type="chain" id="PRO_0000456638" description="Phenazine 1,6-dicarboxylic acid hydroxylase PhzS">
    <location>
        <begin position="1"/>
        <end position="407"/>
    </location>
</feature>
<feature type="binding site" evidence="1">
    <location>
        <position position="17"/>
    </location>
    <ligand>
        <name>FAD</name>
        <dbReference type="ChEBI" id="CHEBI:57692"/>
    </ligand>
</feature>
<feature type="binding site" evidence="1">
    <location>
        <position position="134"/>
    </location>
    <ligand>
        <name>FAD</name>
        <dbReference type="ChEBI" id="CHEBI:57692"/>
    </ligand>
</feature>
<feature type="binding site" evidence="1">
    <location>
        <position position="313"/>
    </location>
    <ligand>
        <name>FAD</name>
        <dbReference type="ChEBI" id="CHEBI:57692"/>
    </ligand>
</feature>
<feature type="site" description="Involved in substrate activation for the transfer of oxygen from the flavin hydroperoxide" evidence="1">
    <location>
        <position position="219"/>
    </location>
</feature>
<evidence type="ECO:0000250" key="1">
    <source>
        <dbReference type="UniProtKB" id="A6T923"/>
    </source>
</evidence>
<evidence type="ECO:0000269" key="2">
    <source>
    </source>
</evidence>
<evidence type="ECO:0000269" key="3">
    <source>
    </source>
</evidence>
<evidence type="ECO:0000303" key="4">
    <source>
    </source>
</evidence>
<evidence type="ECO:0000303" key="5">
    <source>
    </source>
</evidence>
<evidence type="ECO:0000305" key="6"/>
<evidence type="ECO:0000312" key="7">
    <source>
        <dbReference type="EMBL" id="AMQ09358.1"/>
    </source>
</evidence>
<accession>A0A172J1S0</accession>
<comment type="function">
    <text evidence="2 3">Involved in the biosynthesis of phenazine natural products including myxin, an N(5),N(10)-dioxide phenazine antiobiotic, which has antimicrobial activity. Catalyzes the decarboxylative hydroxylations of phenazine 1,6-dicarboxylic acid (PDC) to produce 1,6-dihydroxyphenazine (DHP) (PubMed:27145204, PubMed:29510028). Low activity with phenazine 1-carboxylic acid (PCA) to produce 1-hydroxyphenazine (PubMed:29510028).</text>
</comment>
<comment type="catalytic activity">
    <reaction evidence="2">
        <text>phenazine-1,6-dicarboxylate + NADH + O2 + 2 H(+) = 6-hydroxyphenazine-1-carboxylate + CO2 + NAD(+) + H2O</text>
        <dbReference type="Rhea" id="RHEA:72519"/>
        <dbReference type="ChEBI" id="CHEBI:15377"/>
        <dbReference type="ChEBI" id="CHEBI:15378"/>
        <dbReference type="ChEBI" id="CHEBI:15379"/>
        <dbReference type="ChEBI" id="CHEBI:16526"/>
        <dbReference type="ChEBI" id="CHEBI:57540"/>
        <dbReference type="ChEBI" id="CHEBI:57945"/>
        <dbReference type="ChEBI" id="CHEBI:131980"/>
        <dbReference type="ChEBI" id="CHEBI:192496"/>
    </reaction>
    <physiologicalReaction direction="left-to-right" evidence="2">
        <dbReference type="Rhea" id="RHEA:72520"/>
    </physiologicalReaction>
</comment>
<comment type="catalytic activity">
    <reaction evidence="2">
        <text>6-hydroxyphenazine-1-carboxylate + NADH + O2 + 2 H(+) = 1,6-dihydroxyphenazine + CO2 + NAD(+) + H2O</text>
        <dbReference type="Rhea" id="RHEA:72671"/>
        <dbReference type="ChEBI" id="CHEBI:15377"/>
        <dbReference type="ChEBI" id="CHEBI:15378"/>
        <dbReference type="ChEBI" id="CHEBI:15379"/>
        <dbReference type="ChEBI" id="CHEBI:16526"/>
        <dbReference type="ChEBI" id="CHEBI:57540"/>
        <dbReference type="ChEBI" id="CHEBI:57945"/>
        <dbReference type="ChEBI" id="CHEBI:192365"/>
        <dbReference type="ChEBI" id="CHEBI:192496"/>
    </reaction>
    <physiologicalReaction direction="left-to-right" evidence="2">
        <dbReference type="Rhea" id="RHEA:72672"/>
    </physiologicalReaction>
</comment>
<comment type="catalytic activity">
    <reaction evidence="3">
        <text>phenazine-1-carboxylate + NADH + O2 + 2 H(+) = 1-hydroxyphenazine + CO2 + NAD(+) + H2O</text>
        <dbReference type="Rhea" id="RHEA:53868"/>
        <dbReference type="ChEBI" id="CHEBI:15377"/>
        <dbReference type="ChEBI" id="CHEBI:15378"/>
        <dbReference type="ChEBI" id="CHEBI:15379"/>
        <dbReference type="ChEBI" id="CHEBI:16526"/>
        <dbReference type="ChEBI" id="CHEBI:57540"/>
        <dbReference type="ChEBI" id="CHEBI:57945"/>
        <dbReference type="ChEBI" id="CHEBI:62216"/>
        <dbReference type="ChEBI" id="CHEBI:62248"/>
        <dbReference type="EC" id="1.14.13.218"/>
    </reaction>
    <physiologicalReaction direction="left-to-right" evidence="3">
        <dbReference type="Rhea" id="RHEA:53869"/>
    </physiologicalReaction>
</comment>
<comment type="cofactor">
    <cofactor evidence="1">
        <name>FAD</name>
        <dbReference type="ChEBI" id="CHEBI:57692"/>
    </cofactor>
</comment>
<comment type="disruption phenotype">
    <text evidence="2">No antibacterial activity toward E.coli or B.subtilis.</text>
</comment>
<proteinExistence type="evidence at protein level"/>
<sequence length="407" mass="44166">MTTATQTDIVIAGAGIGGLTTALALHAQGIERVVVLESANEIRPLGVGINVQPAAIAQLFALGLGEAIAATGIATRELRYLDHAGITLWTEPRGLAAGDPYPQYAIHRGELQMLLLAAVRERLGADTVRTGLRVQDFEHTRTGIRVHAQERGNGGSTVSFEATALVGADGLHSAVRARLHPDRCELLPARIQMWRGLTEVDEFLDGRSMIVANDDRSTRLIAYPCSARHAQHGRALINWVCMVPDVAQDLTREASWDCSGQLKDVLPYFADWKFGWLDVPDLLSRSTQILEYPMVDRDPLPRWGIGRATLLGDAAHLMYPVGANGASQAILDAVSLANELGDNSDTVEALQRYEAVRRPPTTAIVQANRDRDTAERAIATRPDPEKTAALAAITSSYRSIVDRSHVQ</sequence>
<keyword id="KW-0274">FAD</keyword>
<keyword id="KW-0285">Flavoprotein</keyword>
<keyword id="KW-0503">Monooxygenase</keyword>
<keyword id="KW-0520">NAD</keyword>
<keyword id="KW-0560">Oxidoreductase</keyword>
<reference evidence="7" key="1">
    <citation type="journal article" date="2016" name="Org. Lett.">
        <title>Heterocyclic Aromatic N-Oxidation in the Biosynthesis of Phenazine Antibiotics from Lysobacter antibioticus.</title>
        <authorList>
            <person name="Zhao Y."/>
            <person name="Qian G."/>
            <person name="Ye Y."/>
            <person name="Wright S."/>
            <person name="Chen H."/>
            <person name="Shen Y."/>
            <person name="Liu F."/>
            <person name="Du L."/>
        </authorList>
    </citation>
    <scope>NUCLEOTIDE SEQUENCE [GENOMIC DNA]</scope>
    <scope>FUNCTION</scope>
    <scope>CATALYTIC ACTIVITY</scope>
    <scope>DISRUPTION PHENOTYPE</scope>
    <source>
        <strain evidence="7">OH13</strain>
    </source>
</reference>
<reference key="2">
    <citation type="journal article" date="2018" name="ACS Chem. Biol.">
        <title>Functional and Structural Analysis of Phenazine O-Methyltransferase LaPhzM from Lysobacter antibioticus OH13 and One-Pot Enzymatic Synthesis of the Antibiotic Myxin.</title>
        <authorList>
            <person name="Jiang J."/>
            <person name="Guiza Beltran D."/>
            <person name="Schacht A."/>
            <person name="Wright S."/>
            <person name="Zhang L."/>
            <person name="Du L."/>
        </authorList>
    </citation>
    <scope>FUNCTION</scope>
    <scope>CATALYTIC ACTIVITY</scope>
    <source>
        <strain evidence="5">OH13</strain>
    </source>
</reference>
<organism>
    <name type="scientific">Lysobacter antibioticus</name>
    <dbReference type="NCBI Taxonomy" id="84531"/>
    <lineage>
        <taxon>Bacteria</taxon>
        <taxon>Pseudomonadati</taxon>
        <taxon>Pseudomonadota</taxon>
        <taxon>Gammaproteobacteria</taxon>
        <taxon>Lysobacterales</taxon>
        <taxon>Lysobacteraceae</taxon>
        <taxon>Lysobacter</taxon>
    </lineage>
</organism>
<name>PHZS_LYSAN</name>
<dbReference type="EC" id="1.14.13.-" evidence="2 3"/>
<dbReference type="EC" id="1.14.13.218" evidence="3"/>
<dbReference type="EMBL" id="KU900197">
    <property type="protein sequence ID" value="AMQ09358.1"/>
    <property type="molecule type" value="Genomic_DNA"/>
</dbReference>
<dbReference type="SMR" id="A0A172J1S0"/>
<dbReference type="GO" id="GO:0071949">
    <property type="term" value="F:FAD binding"/>
    <property type="evidence" value="ECO:0000250"/>
    <property type="project" value="UniProtKB"/>
</dbReference>
<dbReference type="GO" id="GO:0004497">
    <property type="term" value="F:monooxygenase activity"/>
    <property type="evidence" value="ECO:0000314"/>
    <property type="project" value="UniProtKB"/>
</dbReference>
<dbReference type="GO" id="GO:0002047">
    <property type="term" value="P:phenazine biosynthetic process"/>
    <property type="evidence" value="ECO:0000314"/>
    <property type="project" value="UniProtKB"/>
</dbReference>
<dbReference type="Gene3D" id="3.30.9.30">
    <property type="match status" value="1"/>
</dbReference>
<dbReference type="Gene3D" id="3.50.50.60">
    <property type="entry name" value="FAD/NAD(P)-binding domain"/>
    <property type="match status" value="1"/>
</dbReference>
<dbReference type="InterPro" id="IPR002938">
    <property type="entry name" value="FAD-bd"/>
</dbReference>
<dbReference type="InterPro" id="IPR050493">
    <property type="entry name" value="FAD-dep_Monooxygenase_BioMet"/>
</dbReference>
<dbReference type="InterPro" id="IPR036188">
    <property type="entry name" value="FAD/NAD-bd_sf"/>
</dbReference>
<dbReference type="NCBIfam" id="NF005720">
    <property type="entry name" value="PRK07538.1"/>
    <property type="match status" value="1"/>
</dbReference>
<dbReference type="PANTHER" id="PTHR13789:SF268">
    <property type="entry name" value="5-METHYLPHENAZINE-1-CARBOXYLATE 1-MONOOXYGENASE"/>
    <property type="match status" value="1"/>
</dbReference>
<dbReference type="PANTHER" id="PTHR13789">
    <property type="entry name" value="MONOOXYGENASE"/>
    <property type="match status" value="1"/>
</dbReference>
<dbReference type="Pfam" id="PF01494">
    <property type="entry name" value="FAD_binding_3"/>
    <property type="match status" value="2"/>
</dbReference>
<dbReference type="PRINTS" id="PR00420">
    <property type="entry name" value="RNGMNOXGNASE"/>
</dbReference>
<dbReference type="SUPFAM" id="SSF54373">
    <property type="entry name" value="FAD-linked reductases, C-terminal domain"/>
    <property type="match status" value="1"/>
</dbReference>
<dbReference type="SUPFAM" id="SSF51905">
    <property type="entry name" value="FAD/NAD(P)-binding domain"/>
    <property type="match status" value="1"/>
</dbReference>